<protein>
    <recommendedName>
        <fullName evidence="1">Phospho-N-acetylmuramoyl-pentapeptide-transferase</fullName>
        <ecNumber evidence="1">2.7.8.13</ecNumber>
    </recommendedName>
    <alternativeName>
        <fullName evidence="1">UDP-MurNAc-pentapeptide phosphotransferase</fullName>
    </alternativeName>
</protein>
<keyword id="KW-0131">Cell cycle</keyword>
<keyword id="KW-0132">Cell division</keyword>
<keyword id="KW-0997">Cell inner membrane</keyword>
<keyword id="KW-1003">Cell membrane</keyword>
<keyword id="KW-0133">Cell shape</keyword>
<keyword id="KW-0961">Cell wall biogenesis/degradation</keyword>
<keyword id="KW-0460">Magnesium</keyword>
<keyword id="KW-0472">Membrane</keyword>
<keyword id="KW-0479">Metal-binding</keyword>
<keyword id="KW-0573">Peptidoglycan synthesis</keyword>
<keyword id="KW-1185">Reference proteome</keyword>
<keyword id="KW-0808">Transferase</keyword>
<keyword id="KW-0812">Transmembrane</keyword>
<keyword id="KW-1133">Transmembrane helix</keyword>
<evidence type="ECO:0000255" key="1">
    <source>
        <dbReference type="HAMAP-Rule" id="MF_00038"/>
    </source>
</evidence>
<comment type="function">
    <text evidence="1">Catalyzes the initial step of the lipid cycle reactions in the biosynthesis of the cell wall peptidoglycan: transfers peptidoglycan precursor phospho-MurNAc-pentapeptide from UDP-MurNAc-pentapeptide onto the lipid carrier undecaprenyl phosphate, yielding undecaprenyl-pyrophosphoryl-MurNAc-pentapeptide, known as lipid I.</text>
</comment>
<comment type="catalytic activity">
    <reaction evidence="1">
        <text>UDP-N-acetyl-alpha-D-muramoyl-L-alanyl-gamma-D-glutamyl-meso-2,6-diaminopimeloyl-D-alanyl-D-alanine + di-trans,octa-cis-undecaprenyl phosphate = di-trans,octa-cis-undecaprenyl diphospho-N-acetyl-alpha-D-muramoyl-L-alanyl-D-glutamyl-meso-2,6-diaminopimeloyl-D-alanyl-D-alanine + UMP</text>
        <dbReference type="Rhea" id="RHEA:28386"/>
        <dbReference type="ChEBI" id="CHEBI:57865"/>
        <dbReference type="ChEBI" id="CHEBI:60392"/>
        <dbReference type="ChEBI" id="CHEBI:61386"/>
        <dbReference type="ChEBI" id="CHEBI:61387"/>
        <dbReference type="EC" id="2.7.8.13"/>
    </reaction>
</comment>
<comment type="cofactor">
    <cofactor evidence="1">
        <name>Mg(2+)</name>
        <dbReference type="ChEBI" id="CHEBI:18420"/>
    </cofactor>
</comment>
<comment type="pathway">
    <text evidence="1">Cell wall biogenesis; peptidoglycan biosynthesis.</text>
</comment>
<comment type="subcellular location">
    <subcellularLocation>
        <location evidence="1">Cell inner membrane</location>
        <topology evidence="1">Multi-pass membrane protein</topology>
    </subcellularLocation>
</comment>
<comment type="similarity">
    <text evidence="1">Belongs to the glycosyltransferase 4 family. MraY subfamily.</text>
</comment>
<feature type="chain" id="PRO_0000108833" description="Phospho-N-acetylmuramoyl-pentapeptide-transferase">
    <location>
        <begin position="1"/>
        <end position="360"/>
    </location>
</feature>
<feature type="transmembrane region" description="Helical" evidence="1">
    <location>
        <begin position="21"/>
        <end position="41"/>
    </location>
</feature>
<feature type="transmembrane region" description="Helical" evidence="1">
    <location>
        <begin position="73"/>
        <end position="93"/>
    </location>
</feature>
<feature type="transmembrane region" description="Helical" evidence="1">
    <location>
        <begin position="94"/>
        <end position="114"/>
    </location>
</feature>
<feature type="transmembrane region" description="Helical" evidence="1">
    <location>
        <begin position="132"/>
        <end position="152"/>
    </location>
</feature>
<feature type="transmembrane region" description="Helical" evidence="1">
    <location>
        <begin position="168"/>
        <end position="188"/>
    </location>
</feature>
<feature type="transmembrane region" description="Helical" evidence="1">
    <location>
        <begin position="199"/>
        <end position="219"/>
    </location>
</feature>
<feature type="transmembrane region" description="Helical" evidence="1">
    <location>
        <begin position="239"/>
        <end position="259"/>
    </location>
</feature>
<feature type="transmembrane region" description="Helical" evidence="1">
    <location>
        <begin position="263"/>
        <end position="283"/>
    </location>
</feature>
<feature type="transmembrane region" description="Helical" evidence="1">
    <location>
        <begin position="288"/>
        <end position="308"/>
    </location>
</feature>
<feature type="transmembrane region" description="Helical" evidence="1">
    <location>
        <begin position="338"/>
        <end position="358"/>
    </location>
</feature>
<proteinExistence type="inferred from homology"/>
<dbReference type="EC" id="2.7.8.13" evidence="1"/>
<dbReference type="EMBL" id="L42023">
    <property type="protein sequence ID" value="AAC22790.1"/>
    <property type="molecule type" value="Genomic_DNA"/>
</dbReference>
<dbReference type="PIR" id="A64185">
    <property type="entry name" value="A64185"/>
</dbReference>
<dbReference type="RefSeq" id="NP_439293.1">
    <property type="nucleotide sequence ID" value="NC_000907.1"/>
</dbReference>
<dbReference type="SMR" id="P45062"/>
<dbReference type="STRING" id="71421.HI_1135"/>
<dbReference type="EnsemblBacteria" id="AAC22790">
    <property type="protein sequence ID" value="AAC22790"/>
    <property type="gene ID" value="HI_1135"/>
</dbReference>
<dbReference type="KEGG" id="hin:HI_1135"/>
<dbReference type="PATRIC" id="fig|71421.8.peg.1185"/>
<dbReference type="eggNOG" id="COG0472">
    <property type="taxonomic scope" value="Bacteria"/>
</dbReference>
<dbReference type="HOGENOM" id="CLU_023982_0_0_6"/>
<dbReference type="OrthoDB" id="9805475at2"/>
<dbReference type="PhylomeDB" id="P45062"/>
<dbReference type="BioCyc" id="HINF71421:G1GJ1-1168-MONOMER"/>
<dbReference type="UniPathway" id="UPA00219"/>
<dbReference type="Proteomes" id="UP000000579">
    <property type="component" value="Chromosome"/>
</dbReference>
<dbReference type="GO" id="GO:0005886">
    <property type="term" value="C:plasma membrane"/>
    <property type="evidence" value="ECO:0000318"/>
    <property type="project" value="GO_Central"/>
</dbReference>
<dbReference type="GO" id="GO:0046872">
    <property type="term" value="F:metal ion binding"/>
    <property type="evidence" value="ECO:0007669"/>
    <property type="project" value="UniProtKB-KW"/>
</dbReference>
<dbReference type="GO" id="GO:0008963">
    <property type="term" value="F:phospho-N-acetylmuramoyl-pentapeptide-transferase activity"/>
    <property type="evidence" value="ECO:0000318"/>
    <property type="project" value="GO_Central"/>
</dbReference>
<dbReference type="GO" id="GO:0051992">
    <property type="term" value="F:UDP-N-acetylmuramoyl-L-alanyl-D-glutamyl-meso-2,6-diaminopimelyl-D-alanyl-D-alanine:undecaprenyl-phosphate transferase activity"/>
    <property type="evidence" value="ECO:0007669"/>
    <property type="project" value="RHEA"/>
</dbReference>
<dbReference type="GO" id="GO:0051301">
    <property type="term" value="P:cell division"/>
    <property type="evidence" value="ECO:0007669"/>
    <property type="project" value="UniProtKB-KW"/>
</dbReference>
<dbReference type="GO" id="GO:0044038">
    <property type="term" value="P:cell wall macromolecule biosynthetic process"/>
    <property type="evidence" value="ECO:0000318"/>
    <property type="project" value="GO_Central"/>
</dbReference>
<dbReference type="GO" id="GO:0071555">
    <property type="term" value="P:cell wall organization"/>
    <property type="evidence" value="ECO:0000318"/>
    <property type="project" value="GO_Central"/>
</dbReference>
<dbReference type="GO" id="GO:0009252">
    <property type="term" value="P:peptidoglycan biosynthetic process"/>
    <property type="evidence" value="ECO:0007669"/>
    <property type="project" value="UniProtKB-UniRule"/>
</dbReference>
<dbReference type="GO" id="GO:0008360">
    <property type="term" value="P:regulation of cell shape"/>
    <property type="evidence" value="ECO:0007669"/>
    <property type="project" value="UniProtKB-KW"/>
</dbReference>
<dbReference type="CDD" id="cd06852">
    <property type="entry name" value="GT_MraY"/>
    <property type="match status" value="1"/>
</dbReference>
<dbReference type="HAMAP" id="MF_00038">
    <property type="entry name" value="MraY"/>
    <property type="match status" value="1"/>
</dbReference>
<dbReference type="InterPro" id="IPR000715">
    <property type="entry name" value="Glycosyl_transferase_4"/>
</dbReference>
<dbReference type="InterPro" id="IPR003524">
    <property type="entry name" value="PNAcMuramoyl-5peptid_Trfase"/>
</dbReference>
<dbReference type="InterPro" id="IPR018480">
    <property type="entry name" value="PNAcMuramoyl-5peptid_Trfase_CS"/>
</dbReference>
<dbReference type="NCBIfam" id="TIGR00445">
    <property type="entry name" value="mraY"/>
    <property type="match status" value="1"/>
</dbReference>
<dbReference type="PANTHER" id="PTHR22926">
    <property type="entry name" value="PHOSPHO-N-ACETYLMURAMOYL-PENTAPEPTIDE-TRANSFERASE"/>
    <property type="match status" value="1"/>
</dbReference>
<dbReference type="PANTHER" id="PTHR22926:SF5">
    <property type="entry name" value="PHOSPHO-N-ACETYLMURAMOYL-PENTAPEPTIDE-TRANSFERASE HOMOLOG"/>
    <property type="match status" value="1"/>
</dbReference>
<dbReference type="Pfam" id="PF00953">
    <property type="entry name" value="Glycos_transf_4"/>
    <property type="match status" value="1"/>
</dbReference>
<dbReference type="Pfam" id="PF10555">
    <property type="entry name" value="MraY_sig1"/>
    <property type="match status" value="1"/>
</dbReference>
<dbReference type="PROSITE" id="PS01347">
    <property type="entry name" value="MRAY_1"/>
    <property type="match status" value="1"/>
</dbReference>
<dbReference type="PROSITE" id="PS01348">
    <property type="entry name" value="MRAY_2"/>
    <property type="match status" value="1"/>
</dbReference>
<accession>P45062</accession>
<sequence>MLVWLAEYLVRYETAFNAISYITVRANLALLTALFISLWIGPKVIKRLQILKFGQEVRNDGPESHFAKKGTPTMGGVMILFSIGVSTLLWANLANPYIWVCLFVLFGYGAIGFVDDFRKITRKNTDGLIARWKYFWMSVVALVAILWLYWLGHDTDATRLVIPFFKDIMPQLGLFYIVLSYFVIVGTGNAVNLTDGLDGLAIMPTALVAGAFALIAWATGNVNFAEYLHIPYIKYSSEVVVFCTAIVGASLGFLWFNTYPAQVFMGDVGSLALGGALGVVAILVRQEFLLVIMGGVFVVEALSVILQVGSYKLRKQRIFRMAPIHHHFELKGWPEPRVIIRFWIISLMLVLMGLVTLKLR</sequence>
<reference key="1">
    <citation type="journal article" date="1995" name="Science">
        <title>Whole-genome random sequencing and assembly of Haemophilus influenzae Rd.</title>
        <authorList>
            <person name="Fleischmann R.D."/>
            <person name="Adams M.D."/>
            <person name="White O."/>
            <person name="Clayton R.A."/>
            <person name="Kirkness E.F."/>
            <person name="Kerlavage A.R."/>
            <person name="Bult C.J."/>
            <person name="Tomb J.-F."/>
            <person name="Dougherty B.A."/>
            <person name="Merrick J.M."/>
            <person name="McKenney K."/>
            <person name="Sutton G.G."/>
            <person name="FitzHugh W."/>
            <person name="Fields C.A."/>
            <person name="Gocayne J.D."/>
            <person name="Scott J.D."/>
            <person name="Shirley R."/>
            <person name="Liu L.-I."/>
            <person name="Glodek A."/>
            <person name="Kelley J.M."/>
            <person name="Weidman J.F."/>
            <person name="Phillips C.A."/>
            <person name="Spriggs T."/>
            <person name="Hedblom E."/>
            <person name="Cotton M.D."/>
            <person name="Utterback T.R."/>
            <person name="Hanna M.C."/>
            <person name="Nguyen D.T."/>
            <person name="Saudek D.M."/>
            <person name="Brandon R.C."/>
            <person name="Fine L.D."/>
            <person name="Fritchman J.L."/>
            <person name="Fuhrmann J.L."/>
            <person name="Geoghagen N.S.M."/>
            <person name="Gnehm C.L."/>
            <person name="McDonald L.A."/>
            <person name="Small K.V."/>
            <person name="Fraser C.M."/>
            <person name="Smith H.O."/>
            <person name="Venter J.C."/>
        </authorList>
    </citation>
    <scope>NUCLEOTIDE SEQUENCE [LARGE SCALE GENOMIC DNA]</scope>
    <source>
        <strain>ATCC 51907 / DSM 11121 / KW20 / Rd</strain>
    </source>
</reference>
<gene>
    <name evidence="1" type="primary">mraY</name>
    <name type="ordered locus">HI_1135</name>
</gene>
<name>MRAY_HAEIN</name>
<organism>
    <name type="scientific">Haemophilus influenzae (strain ATCC 51907 / DSM 11121 / KW20 / Rd)</name>
    <dbReference type="NCBI Taxonomy" id="71421"/>
    <lineage>
        <taxon>Bacteria</taxon>
        <taxon>Pseudomonadati</taxon>
        <taxon>Pseudomonadota</taxon>
        <taxon>Gammaproteobacteria</taxon>
        <taxon>Pasteurellales</taxon>
        <taxon>Pasteurellaceae</taxon>
        <taxon>Haemophilus</taxon>
    </lineage>
</organism>